<comment type="catalytic activity">
    <reaction evidence="1">
        <text>ATP + H2O = ADP + phosphate + H(+)</text>
        <dbReference type="Rhea" id="RHEA:13065"/>
        <dbReference type="ChEBI" id="CHEBI:15377"/>
        <dbReference type="ChEBI" id="CHEBI:15378"/>
        <dbReference type="ChEBI" id="CHEBI:30616"/>
        <dbReference type="ChEBI" id="CHEBI:43474"/>
        <dbReference type="ChEBI" id="CHEBI:456216"/>
    </reaction>
    <physiologicalReaction direction="left-to-right" evidence="1">
        <dbReference type="Rhea" id="RHEA:13066"/>
    </physiologicalReaction>
</comment>
<comment type="subcellular location">
    <subcellularLocation>
        <location evidence="4">Plastid</location>
        <location evidence="4">Chloroplast stroma</location>
    </subcellularLocation>
</comment>
<comment type="disruption phenotype">
    <text evidence="4">No visible phenotype under normal growth conditions.</text>
</comment>
<comment type="similarity">
    <text evidence="6">Belongs to the arsA ATPase family.</text>
</comment>
<comment type="sequence caution" evidence="6">
    <conflict type="erroneous gene model prediction">
        <sequence resource="EMBL-CDS" id="AAF02825"/>
    </conflict>
</comment>
<protein>
    <recommendedName>
        <fullName evidence="6">ATPase GET3B</fullName>
        <shortName evidence="5">AtGET3B</shortName>
        <ecNumber evidence="1">3.6.-.-</ecNumber>
    </recommendedName>
    <alternativeName>
        <fullName evidence="6">Guided entry of tail-anchored proteins 3 homolog B</fullName>
    </alternativeName>
</protein>
<name>GET3B_ARATH</name>
<dbReference type="EC" id="3.6.-.-" evidence="1"/>
<dbReference type="EMBL" id="AC009400">
    <property type="protein sequence ID" value="AAF02825.1"/>
    <property type="status" value="ALT_SEQ"/>
    <property type="molecule type" value="Genomic_DNA"/>
</dbReference>
<dbReference type="EMBL" id="CP002686">
    <property type="protein sequence ID" value="AEE74894.1"/>
    <property type="molecule type" value="Genomic_DNA"/>
</dbReference>
<dbReference type="EMBL" id="BT029768">
    <property type="protein sequence ID" value="ABM06038.1"/>
    <property type="molecule type" value="mRNA"/>
</dbReference>
<dbReference type="RefSeq" id="NP_187646.2">
    <property type="nucleotide sequence ID" value="NM_111870.3"/>
</dbReference>
<dbReference type="SMR" id="A1L4Y1"/>
<dbReference type="FunCoup" id="A1L4Y1">
    <property type="interactions" value="404"/>
</dbReference>
<dbReference type="ProteomicsDB" id="181222"/>
<dbReference type="EnsemblPlants" id="AT3G10350.1">
    <property type="protein sequence ID" value="AT3G10350.1"/>
    <property type="gene ID" value="AT3G10350"/>
</dbReference>
<dbReference type="GeneID" id="820197"/>
<dbReference type="Gramene" id="AT3G10350.1">
    <property type="protein sequence ID" value="AT3G10350.1"/>
    <property type="gene ID" value="AT3G10350"/>
</dbReference>
<dbReference type="KEGG" id="ath:AT3G10350"/>
<dbReference type="Araport" id="AT3G10350"/>
<dbReference type="TAIR" id="AT3G10350">
    <property type="gene designation" value="GET3B"/>
</dbReference>
<dbReference type="HOGENOM" id="CLU_040761_2_1_1"/>
<dbReference type="InParanoid" id="A1L4Y1"/>
<dbReference type="OMA" id="YAMMLDM"/>
<dbReference type="PhylomeDB" id="A1L4Y1"/>
<dbReference type="PRO" id="PR:A1L4Y1"/>
<dbReference type="Proteomes" id="UP000006548">
    <property type="component" value="Chromosome 3"/>
</dbReference>
<dbReference type="ExpressionAtlas" id="A1L4Y1">
    <property type="expression patterns" value="baseline and differential"/>
</dbReference>
<dbReference type="GO" id="GO:0009570">
    <property type="term" value="C:chloroplast stroma"/>
    <property type="evidence" value="ECO:0007669"/>
    <property type="project" value="UniProtKB-SubCell"/>
</dbReference>
<dbReference type="GO" id="GO:0005524">
    <property type="term" value="F:ATP binding"/>
    <property type="evidence" value="ECO:0007669"/>
    <property type="project" value="UniProtKB-KW"/>
</dbReference>
<dbReference type="GO" id="GO:0016887">
    <property type="term" value="F:ATP hydrolysis activity"/>
    <property type="evidence" value="ECO:0007669"/>
    <property type="project" value="InterPro"/>
</dbReference>
<dbReference type="CDD" id="cd02035">
    <property type="entry name" value="ArsA"/>
    <property type="match status" value="1"/>
</dbReference>
<dbReference type="FunFam" id="3.40.50.300:FF:000936">
    <property type="entry name" value="Arsenical pump-driving ATPase"/>
    <property type="match status" value="1"/>
</dbReference>
<dbReference type="Gene3D" id="3.40.50.300">
    <property type="entry name" value="P-loop containing nucleotide triphosphate hydrolases"/>
    <property type="match status" value="1"/>
</dbReference>
<dbReference type="InterPro" id="IPR025723">
    <property type="entry name" value="Anion-transp_ATPase-like_dom"/>
</dbReference>
<dbReference type="InterPro" id="IPR016300">
    <property type="entry name" value="ATPase_ArsA/GET3"/>
</dbReference>
<dbReference type="InterPro" id="IPR027417">
    <property type="entry name" value="P-loop_NTPase"/>
</dbReference>
<dbReference type="NCBIfam" id="TIGR00345">
    <property type="entry name" value="GET3_arsA_TRC40"/>
    <property type="match status" value="1"/>
</dbReference>
<dbReference type="PANTHER" id="PTHR10803">
    <property type="entry name" value="ARSENICAL PUMP-DRIVING ATPASE ARSENITE-TRANSLOCATING ATPASE"/>
    <property type="match status" value="1"/>
</dbReference>
<dbReference type="PANTHER" id="PTHR10803:SF0">
    <property type="entry name" value="ATPASE GET3B"/>
    <property type="match status" value="1"/>
</dbReference>
<dbReference type="Pfam" id="PF02374">
    <property type="entry name" value="ArsA_ATPase"/>
    <property type="match status" value="1"/>
</dbReference>
<dbReference type="SUPFAM" id="SSF52540">
    <property type="entry name" value="P-loop containing nucleoside triphosphate hydrolases"/>
    <property type="match status" value="1"/>
</dbReference>
<feature type="transit peptide" description="Chloroplast" evidence="2">
    <location>
        <begin position="1"/>
        <end position="67"/>
    </location>
</feature>
<feature type="chain" id="PRO_0000449809" description="ATPase GET3B">
    <location>
        <begin position="68"/>
        <end position="411"/>
    </location>
</feature>
<feature type="active site" evidence="3">
    <location>
        <position position="124"/>
    </location>
</feature>
<feature type="binding site" evidence="3">
    <location>
        <begin position="95"/>
        <end position="102"/>
    </location>
    <ligand>
        <name>ATP</name>
        <dbReference type="ChEBI" id="CHEBI:30616"/>
    </ligand>
</feature>
<feature type="binding site" evidence="3">
    <location>
        <position position="348"/>
    </location>
    <ligand>
        <name>ATP</name>
        <dbReference type="ChEBI" id="CHEBI:30616"/>
    </ligand>
</feature>
<reference key="1">
    <citation type="journal article" date="2000" name="Nature">
        <title>Sequence and analysis of chromosome 3 of the plant Arabidopsis thaliana.</title>
        <authorList>
            <person name="Salanoubat M."/>
            <person name="Lemcke K."/>
            <person name="Rieger M."/>
            <person name="Ansorge W."/>
            <person name="Unseld M."/>
            <person name="Fartmann B."/>
            <person name="Valle G."/>
            <person name="Bloecker H."/>
            <person name="Perez-Alonso M."/>
            <person name="Obermaier B."/>
            <person name="Delseny M."/>
            <person name="Boutry M."/>
            <person name="Grivell L.A."/>
            <person name="Mache R."/>
            <person name="Puigdomenech P."/>
            <person name="De Simone V."/>
            <person name="Choisne N."/>
            <person name="Artiguenave F."/>
            <person name="Robert C."/>
            <person name="Brottier P."/>
            <person name="Wincker P."/>
            <person name="Cattolico L."/>
            <person name="Weissenbach J."/>
            <person name="Saurin W."/>
            <person name="Quetier F."/>
            <person name="Schaefer M."/>
            <person name="Mueller-Auer S."/>
            <person name="Gabel C."/>
            <person name="Fuchs M."/>
            <person name="Benes V."/>
            <person name="Wurmbach E."/>
            <person name="Drzonek H."/>
            <person name="Erfle H."/>
            <person name="Jordan N."/>
            <person name="Bangert S."/>
            <person name="Wiedelmann R."/>
            <person name="Kranz H."/>
            <person name="Voss H."/>
            <person name="Holland R."/>
            <person name="Brandt P."/>
            <person name="Nyakatura G."/>
            <person name="Vezzi A."/>
            <person name="D'Angelo M."/>
            <person name="Pallavicini A."/>
            <person name="Toppo S."/>
            <person name="Simionati B."/>
            <person name="Conrad A."/>
            <person name="Hornischer K."/>
            <person name="Kauer G."/>
            <person name="Loehnert T.-H."/>
            <person name="Nordsiek G."/>
            <person name="Reichelt J."/>
            <person name="Scharfe M."/>
            <person name="Schoen O."/>
            <person name="Bargues M."/>
            <person name="Terol J."/>
            <person name="Climent J."/>
            <person name="Navarro P."/>
            <person name="Collado C."/>
            <person name="Perez-Perez A."/>
            <person name="Ottenwaelder B."/>
            <person name="Duchemin D."/>
            <person name="Cooke R."/>
            <person name="Laudie M."/>
            <person name="Berger-Llauro C."/>
            <person name="Purnelle B."/>
            <person name="Masuy D."/>
            <person name="de Haan M."/>
            <person name="Maarse A.C."/>
            <person name="Alcaraz J.-P."/>
            <person name="Cottet A."/>
            <person name="Casacuberta E."/>
            <person name="Monfort A."/>
            <person name="Argiriou A."/>
            <person name="Flores M."/>
            <person name="Liguori R."/>
            <person name="Vitale D."/>
            <person name="Mannhaupt G."/>
            <person name="Haase D."/>
            <person name="Schoof H."/>
            <person name="Rudd S."/>
            <person name="Zaccaria P."/>
            <person name="Mewes H.-W."/>
            <person name="Mayer K.F.X."/>
            <person name="Kaul S."/>
            <person name="Town C.D."/>
            <person name="Koo H.L."/>
            <person name="Tallon L.J."/>
            <person name="Jenkins J."/>
            <person name="Rooney T."/>
            <person name="Rizzo M."/>
            <person name="Walts A."/>
            <person name="Utterback T."/>
            <person name="Fujii C.Y."/>
            <person name="Shea T.P."/>
            <person name="Creasy T.H."/>
            <person name="Haas B."/>
            <person name="Maiti R."/>
            <person name="Wu D."/>
            <person name="Peterson J."/>
            <person name="Van Aken S."/>
            <person name="Pai G."/>
            <person name="Militscher J."/>
            <person name="Sellers P."/>
            <person name="Gill J.E."/>
            <person name="Feldblyum T.V."/>
            <person name="Preuss D."/>
            <person name="Lin X."/>
            <person name="Nierman W.C."/>
            <person name="Salzberg S.L."/>
            <person name="White O."/>
            <person name="Venter J.C."/>
            <person name="Fraser C.M."/>
            <person name="Kaneko T."/>
            <person name="Nakamura Y."/>
            <person name="Sato S."/>
            <person name="Kato T."/>
            <person name="Asamizu E."/>
            <person name="Sasamoto S."/>
            <person name="Kimura T."/>
            <person name="Idesawa K."/>
            <person name="Kawashima K."/>
            <person name="Kishida Y."/>
            <person name="Kiyokawa C."/>
            <person name="Kohara M."/>
            <person name="Matsumoto M."/>
            <person name="Matsuno A."/>
            <person name="Muraki A."/>
            <person name="Nakayama S."/>
            <person name="Nakazaki N."/>
            <person name="Shinpo S."/>
            <person name="Takeuchi C."/>
            <person name="Wada T."/>
            <person name="Watanabe A."/>
            <person name="Yamada M."/>
            <person name="Yasuda M."/>
            <person name="Tabata S."/>
        </authorList>
    </citation>
    <scope>NUCLEOTIDE SEQUENCE [LARGE SCALE GENOMIC DNA]</scope>
    <source>
        <strain>cv. Columbia</strain>
    </source>
</reference>
<reference key="2">
    <citation type="journal article" date="2017" name="Plant J.">
        <title>Araport11: a complete reannotation of the Arabidopsis thaliana reference genome.</title>
        <authorList>
            <person name="Cheng C.Y."/>
            <person name="Krishnakumar V."/>
            <person name="Chan A.P."/>
            <person name="Thibaud-Nissen F."/>
            <person name="Schobel S."/>
            <person name="Town C.D."/>
        </authorList>
    </citation>
    <scope>GENOME REANNOTATION</scope>
    <source>
        <strain>cv. Columbia</strain>
    </source>
</reference>
<reference key="3">
    <citation type="submission" date="2006-12" db="EMBL/GenBank/DDBJ databases">
        <title>Arabidopsis ORF clones.</title>
        <authorList>
            <person name="Bautista V.R."/>
            <person name="Kim C.J."/>
            <person name="Chen H."/>
            <person name="Wu S.Y."/>
            <person name="De Los Reyes C."/>
            <person name="Ecker J.R."/>
        </authorList>
    </citation>
    <scope>NUCLEOTIDE SEQUENCE [MRNA]</scope>
    <source>
        <strain>cv. Columbia</strain>
    </source>
</reference>
<reference key="4">
    <citation type="journal article" date="2012" name="Mol. Cell. Proteomics">
        <title>Comparative large-scale characterisation of plant vs. mammal proteins reveals similar and idiosyncratic N-alpha acetylation features.</title>
        <authorList>
            <person name="Bienvenut W.V."/>
            <person name="Sumpton D."/>
            <person name="Martinez A."/>
            <person name="Lilla S."/>
            <person name="Espagne C."/>
            <person name="Meinnel T."/>
            <person name="Giglione C."/>
        </authorList>
    </citation>
    <scope>IDENTIFICATION BY MASS SPECTROMETRY [LARGE SCALE ANALYSIS]</scope>
</reference>
<reference key="5">
    <citation type="journal article" date="2017" name="Proc. Natl. Acad. Sci. U.S.A.">
        <title>Loss of GET pathway orthologs in Arabidopsis thaliana causes root hair growth defects and affects SNARE abundance.</title>
        <authorList>
            <person name="Xing S."/>
            <person name="Mehlhorn D.G."/>
            <person name="Wallmeroth N."/>
            <person name="Asseck L.Y."/>
            <person name="Kar R."/>
            <person name="Voss A."/>
            <person name="Denninger P."/>
            <person name="Schmidt V.A."/>
            <person name="Schwarzlaender M."/>
            <person name="Stierhof Y.D."/>
            <person name="Grossmann G."/>
            <person name="Grefen C."/>
        </authorList>
    </citation>
    <scope>SUBCELLULAR LOCATION</scope>
    <scope>DISRUPTION PHENOTYPE</scope>
</reference>
<organism>
    <name type="scientific">Arabidopsis thaliana</name>
    <name type="common">Mouse-ear cress</name>
    <dbReference type="NCBI Taxonomy" id="3702"/>
    <lineage>
        <taxon>Eukaryota</taxon>
        <taxon>Viridiplantae</taxon>
        <taxon>Streptophyta</taxon>
        <taxon>Embryophyta</taxon>
        <taxon>Tracheophyta</taxon>
        <taxon>Spermatophyta</taxon>
        <taxon>Magnoliopsida</taxon>
        <taxon>eudicotyledons</taxon>
        <taxon>Gunneridae</taxon>
        <taxon>Pentapetalae</taxon>
        <taxon>rosids</taxon>
        <taxon>malvids</taxon>
        <taxon>Brassicales</taxon>
        <taxon>Brassicaceae</taxon>
        <taxon>Camelineae</taxon>
        <taxon>Arabidopsis</taxon>
    </lineage>
</organism>
<accession>A1L4Y1</accession>
<accession>Q9SS46</accession>
<sequence>MATLSSYLLSSPPLCKSRFSATSLVSGIDFISFSPRTTLSSSSTVLPAILSLSVKHNRRRNSLQVKSVASPTETISEFDEMVSGTKRKYYMLGGKGGVGKTSCAASLAVRFANNGHPTLVVSTDPAHSLSDSFAQDLTGGMLVPVEGPEAPLFALEINPEKAREEFRSASQMNGGTGVKDFMDGMGLGMLVEQLGELKLGELLDTPPPGLDEAIAISKVIQFLESPEYNMFTRIVFDTAPTGHTLRLLSLPDFLDASIGKILKLRQKITSATSAIKSVFGKEEKGPDAADKLEKLRERMVKVRELFRDTESTEFVIVTIPTVMAVSESSRLSASLKKESVPVKRLIVNQLLPPSSSDCKFCSIKRKDQMRALDMIREDSELSALTLMEAPLVDMEIRGVPALRFLGDIIWK</sequence>
<keyword id="KW-0067">ATP-binding</keyword>
<keyword id="KW-0150">Chloroplast</keyword>
<keyword id="KW-0378">Hydrolase</keyword>
<keyword id="KW-0547">Nucleotide-binding</keyword>
<keyword id="KW-0934">Plastid</keyword>
<keyword id="KW-1185">Reference proteome</keyword>
<keyword id="KW-0809">Transit peptide</keyword>
<proteinExistence type="evidence at protein level"/>
<gene>
    <name evidence="5" type="primary">GET3B</name>
    <name evidence="7" type="ordered locus">At3g10350</name>
    <name evidence="8" type="ORF">F14P13.5</name>
</gene>
<evidence type="ECO:0000250" key="1">
    <source>
        <dbReference type="UniProtKB" id="Q6DYE4"/>
    </source>
</evidence>
<evidence type="ECO:0000255" key="2"/>
<evidence type="ECO:0000255" key="3">
    <source>
        <dbReference type="HAMAP-Rule" id="MF_03112"/>
    </source>
</evidence>
<evidence type="ECO:0000269" key="4">
    <source>
    </source>
</evidence>
<evidence type="ECO:0000303" key="5">
    <source>
    </source>
</evidence>
<evidence type="ECO:0000305" key="6"/>
<evidence type="ECO:0000312" key="7">
    <source>
        <dbReference type="Araport" id="AT3G10350"/>
    </source>
</evidence>
<evidence type="ECO:0000312" key="8">
    <source>
        <dbReference type="EMBL" id="AAF02825.1"/>
    </source>
</evidence>